<dbReference type="EC" id="5.4.2.10" evidence="1"/>
<dbReference type="EMBL" id="AM421808">
    <property type="protein sequence ID" value="CAM10800.1"/>
    <property type="molecule type" value="Genomic_DNA"/>
</dbReference>
<dbReference type="RefSeq" id="WP_002244655.1">
    <property type="nucleotide sequence ID" value="NC_008767.1"/>
</dbReference>
<dbReference type="SMR" id="A1KV99"/>
<dbReference type="KEGG" id="nmc:NMC1608"/>
<dbReference type="HOGENOM" id="CLU_016950_7_0_4"/>
<dbReference type="Proteomes" id="UP000002286">
    <property type="component" value="Chromosome"/>
</dbReference>
<dbReference type="GO" id="GO:0005829">
    <property type="term" value="C:cytosol"/>
    <property type="evidence" value="ECO:0007669"/>
    <property type="project" value="TreeGrafter"/>
</dbReference>
<dbReference type="GO" id="GO:0000287">
    <property type="term" value="F:magnesium ion binding"/>
    <property type="evidence" value="ECO:0007669"/>
    <property type="project" value="UniProtKB-UniRule"/>
</dbReference>
<dbReference type="GO" id="GO:0008966">
    <property type="term" value="F:phosphoglucosamine mutase activity"/>
    <property type="evidence" value="ECO:0007669"/>
    <property type="project" value="UniProtKB-UniRule"/>
</dbReference>
<dbReference type="GO" id="GO:0004615">
    <property type="term" value="F:phosphomannomutase activity"/>
    <property type="evidence" value="ECO:0007669"/>
    <property type="project" value="TreeGrafter"/>
</dbReference>
<dbReference type="GO" id="GO:0005975">
    <property type="term" value="P:carbohydrate metabolic process"/>
    <property type="evidence" value="ECO:0007669"/>
    <property type="project" value="InterPro"/>
</dbReference>
<dbReference type="GO" id="GO:0009252">
    <property type="term" value="P:peptidoglycan biosynthetic process"/>
    <property type="evidence" value="ECO:0007669"/>
    <property type="project" value="TreeGrafter"/>
</dbReference>
<dbReference type="GO" id="GO:0006048">
    <property type="term" value="P:UDP-N-acetylglucosamine biosynthetic process"/>
    <property type="evidence" value="ECO:0007669"/>
    <property type="project" value="TreeGrafter"/>
</dbReference>
<dbReference type="CDD" id="cd05802">
    <property type="entry name" value="GlmM"/>
    <property type="match status" value="1"/>
</dbReference>
<dbReference type="FunFam" id="3.30.310.50:FF:000001">
    <property type="entry name" value="Phosphoglucosamine mutase"/>
    <property type="match status" value="1"/>
</dbReference>
<dbReference type="FunFam" id="3.40.120.10:FF:000001">
    <property type="entry name" value="Phosphoglucosamine mutase"/>
    <property type="match status" value="1"/>
</dbReference>
<dbReference type="FunFam" id="3.40.120.10:FF:000003">
    <property type="entry name" value="Phosphoglucosamine mutase"/>
    <property type="match status" value="1"/>
</dbReference>
<dbReference type="Gene3D" id="3.40.120.10">
    <property type="entry name" value="Alpha-D-Glucose-1,6-Bisphosphate, subunit A, domain 3"/>
    <property type="match status" value="3"/>
</dbReference>
<dbReference type="Gene3D" id="3.30.310.50">
    <property type="entry name" value="Alpha-D-phosphohexomutase, C-terminal domain"/>
    <property type="match status" value="1"/>
</dbReference>
<dbReference type="HAMAP" id="MF_01554_B">
    <property type="entry name" value="GlmM_B"/>
    <property type="match status" value="1"/>
</dbReference>
<dbReference type="InterPro" id="IPR005844">
    <property type="entry name" value="A-D-PHexomutase_a/b/a-I"/>
</dbReference>
<dbReference type="InterPro" id="IPR016055">
    <property type="entry name" value="A-D-PHexomutase_a/b/a-I/II/III"/>
</dbReference>
<dbReference type="InterPro" id="IPR005845">
    <property type="entry name" value="A-D-PHexomutase_a/b/a-II"/>
</dbReference>
<dbReference type="InterPro" id="IPR005846">
    <property type="entry name" value="A-D-PHexomutase_a/b/a-III"/>
</dbReference>
<dbReference type="InterPro" id="IPR005843">
    <property type="entry name" value="A-D-PHexomutase_C"/>
</dbReference>
<dbReference type="InterPro" id="IPR036900">
    <property type="entry name" value="A-D-PHexomutase_C_sf"/>
</dbReference>
<dbReference type="InterPro" id="IPR005841">
    <property type="entry name" value="Alpha-D-phosphohexomutase_SF"/>
</dbReference>
<dbReference type="InterPro" id="IPR006352">
    <property type="entry name" value="GlmM_bact"/>
</dbReference>
<dbReference type="InterPro" id="IPR050060">
    <property type="entry name" value="Phosphoglucosamine_mutase"/>
</dbReference>
<dbReference type="NCBIfam" id="TIGR01455">
    <property type="entry name" value="glmM"/>
    <property type="match status" value="1"/>
</dbReference>
<dbReference type="NCBIfam" id="NF008139">
    <property type="entry name" value="PRK10887.1"/>
    <property type="match status" value="1"/>
</dbReference>
<dbReference type="PANTHER" id="PTHR42946:SF1">
    <property type="entry name" value="PHOSPHOGLUCOMUTASE (ALPHA-D-GLUCOSE-1,6-BISPHOSPHATE-DEPENDENT)"/>
    <property type="match status" value="1"/>
</dbReference>
<dbReference type="PANTHER" id="PTHR42946">
    <property type="entry name" value="PHOSPHOHEXOSE MUTASE"/>
    <property type="match status" value="1"/>
</dbReference>
<dbReference type="Pfam" id="PF02878">
    <property type="entry name" value="PGM_PMM_I"/>
    <property type="match status" value="1"/>
</dbReference>
<dbReference type="Pfam" id="PF02879">
    <property type="entry name" value="PGM_PMM_II"/>
    <property type="match status" value="1"/>
</dbReference>
<dbReference type="Pfam" id="PF02880">
    <property type="entry name" value="PGM_PMM_III"/>
    <property type="match status" value="1"/>
</dbReference>
<dbReference type="Pfam" id="PF00408">
    <property type="entry name" value="PGM_PMM_IV"/>
    <property type="match status" value="1"/>
</dbReference>
<dbReference type="PRINTS" id="PR00509">
    <property type="entry name" value="PGMPMM"/>
</dbReference>
<dbReference type="SUPFAM" id="SSF55957">
    <property type="entry name" value="Phosphoglucomutase, C-terminal domain"/>
    <property type="match status" value="1"/>
</dbReference>
<dbReference type="SUPFAM" id="SSF53738">
    <property type="entry name" value="Phosphoglucomutase, first 3 domains"/>
    <property type="match status" value="3"/>
</dbReference>
<sequence>MAKKYFGTDGVRGEVGQFPITPDFVLKLGYAAGQVLVQHDTDQKPTVLIGKDTRISGYMLEAALVAGFTAAGVNVVQTGPLPTPGVAYLTRALRLSAGVMISASHNAYSDNGIKFFAEGGVKLSDEVELEIEAKIDGEMKTLPSARLGRARRISGADDRYIEFCKSTFPSHSDLRGLKLVIDTANGAGYGVAPKVFHELGAQVVSIGDEPNGYNINEKCGATYTKTLQAAVLQHEADYGIALDGDGDRLMMVDKNGKVYDGDSLIYVIAKARAREGINIGGVVGTVMTNMAMEIALKEQGVDFCRAKVGDRYVLAQLNQRSWLIGGEASGHILCMDKHNTGDGIISALQVLAALQTLNQDLATVCADWQPYPQTMINVRIQKGQKWQEASKDVLAEVEKELEGKGRVVLRASGTEPVVRVMVEARQADWARDGAERIASAIGSL</sequence>
<organism>
    <name type="scientific">Neisseria meningitidis serogroup C / serotype 2a (strain ATCC 700532 / DSM 15464 / FAM18)</name>
    <dbReference type="NCBI Taxonomy" id="272831"/>
    <lineage>
        <taxon>Bacteria</taxon>
        <taxon>Pseudomonadati</taxon>
        <taxon>Pseudomonadota</taxon>
        <taxon>Betaproteobacteria</taxon>
        <taxon>Neisseriales</taxon>
        <taxon>Neisseriaceae</taxon>
        <taxon>Neisseria</taxon>
    </lineage>
</organism>
<evidence type="ECO:0000255" key="1">
    <source>
        <dbReference type="HAMAP-Rule" id="MF_01554"/>
    </source>
</evidence>
<gene>
    <name evidence="1" type="primary">glmM</name>
    <name type="ordered locus">NMC1608</name>
</gene>
<comment type="function">
    <text evidence="1">Catalyzes the conversion of glucosamine-6-phosphate to glucosamine-1-phosphate.</text>
</comment>
<comment type="catalytic activity">
    <reaction evidence="1">
        <text>alpha-D-glucosamine 1-phosphate = D-glucosamine 6-phosphate</text>
        <dbReference type="Rhea" id="RHEA:23424"/>
        <dbReference type="ChEBI" id="CHEBI:58516"/>
        <dbReference type="ChEBI" id="CHEBI:58725"/>
        <dbReference type="EC" id="5.4.2.10"/>
    </reaction>
</comment>
<comment type="cofactor">
    <cofactor evidence="1">
        <name>Mg(2+)</name>
        <dbReference type="ChEBI" id="CHEBI:18420"/>
    </cofactor>
    <text evidence="1">Binds 1 Mg(2+) ion per subunit.</text>
</comment>
<comment type="PTM">
    <text evidence="1">Activated by phosphorylation.</text>
</comment>
<comment type="similarity">
    <text evidence="1">Belongs to the phosphohexose mutase family.</text>
</comment>
<reference key="1">
    <citation type="journal article" date="2007" name="PLoS Genet.">
        <title>Meningococcal genetic variation mechanisms viewed through comparative analysis of serogroup C strain FAM18.</title>
        <authorList>
            <person name="Bentley S.D."/>
            <person name="Vernikos G.S."/>
            <person name="Snyder L.A.S."/>
            <person name="Churcher C."/>
            <person name="Arrowsmith C."/>
            <person name="Chillingworth T."/>
            <person name="Cronin A."/>
            <person name="Davis P.H."/>
            <person name="Holroyd N.E."/>
            <person name="Jagels K."/>
            <person name="Maddison M."/>
            <person name="Moule S."/>
            <person name="Rabbinowitsch E."/>
            <person name="Sharp S."/>
            <person name="Unwin L."/>
            <person name="Whitehead S."/>
            <person name="Quail M.A."/>
            <person name="Achtman M."/>
            <person name="Barrell B.G."/>
            <person name="Saunders N.J."/>
            <person name="Parkhill J."/>
        </authorList>
    </citation>
    <scope>NUCLEOTIDE SEQUENCE [LARGE SCALE GENOMIC DNA]</scope>
    <source>
        <strain>ATCC 700532 / DSM 15464 / FAM18</strain>
    </source>
</reference>
<accession>A1KV99</accession>
<name>GLMM_NEIMF</name>
<protein>
    <recommendedName>
        <fullName evidence="1">Phosphoglucosamine mutase</fullName>
        <ecNumber evidence="1">5.4.2.10</ecNumber>
    </recommendedName>
</protein>
<feature type="chain" id="PRO_0000301346" description="Phosphoglucosamine mutase">
    <location>
        <begin position="1"/>
        <end position="444"/>
    </location>
</feature>
<feature type="active site" description="Phosphoserine intermediate" evidence="1">
    <location>
        <position position="104"/>
    </location>
</feature>
<feature type="binding site" description="via phosphate group" evidence="1">
    <location>
        <position position="104"/>
    </location>
    <ligand>
        <name>Mg(2+)</name>
        <dbReference type="ChEBI" id="CHEBI:18420"/>
    </ligand>
</feature>
<feature type="binding site" evidence="1">
    <location>
        <position position="243"/>
    </location>
    <ligand>
        <name>Mg(2+)</name>
        <dbReference type="ChEBI" id="CHEBI:18420"/>
    </ligand>
</feature>
<feature type="binding site" evidence="1">
    <location>
        <position position="245"/>
    </location>
    <ligand>
        <name>Mg(2+)</name>
        <dbReference type="ChEBI" id="CHEBI:18420"/>
    </ligand>
</feature>
<feature type="binding site" evidence="1">
    <location>
        <position position="247"/>
    </location>
    <ligand>
        <name>Mg(2+)</name>
        <dbReference type="ChEBI" id="CHEBI:18420"/>
    </ligand>
</feature>
<feature type="modified residue" description="Phosphoserine" evidence="1">
    <location>
        <position position="104"/>
    </location>
</feature>
<proteinExistence type="inferred from homology"/>
<keyword id="KW-0413">Isomerase</keyword>
<keyword id="KW-0460">Magnesium</keyword>
<keyword id="KW-0479">Metal-binding</keyword>
<keyword id="KW-0597">Phosphoprotein</keyword>